<name>HSLU_ENTFA</name>
<accession>Q834K4</accession>
<organism>
    <name type="scientific">Enterococcus faecalis (strain ATCC 700802 / V583)</name>
    <dbReference type="NCBI Taxonomy" id="226185"/>
    <lineage>
        <taxon>Bacteria</taxon>
        <taxon>Bacillati</taxon>
        <taxon>Bacillota</taxon>
        <taxon>Bacilli</taxon>
        <taxon>Lactobacillales</taxon>
        <taxon>Enterococcaceae</taxon>
        <taxon>Enterococcus</taxon>
    </lineage>
</organism>
<comment type="function">
    <text evidence="1">ATPase subunit of a proteasome-like degradation complex; this subunit has chaperone activity. The binding of ATP and its subsequent hydrolysis by HslU are essential for unfolding of protein substrates subsequently hydrolyzed by HslV. HslU recognizes the N-terminal part of its protein substrates and unfolds these before they are guided to HslV for hydrolysis.</text>
</comment>
<comment type="subunit">
    <text evidence="1">A double ring-shaped homohexamer of HslV is capped on each side by a ring-shaped HslU homohexamer. The assembly of the HslU/HslV complex is dependent on binding of ATP.</text>
</comment>
<comment type="subcellular location">
    <subcellularLocation>
        <location evidence="1">Cytoplasm</location>
    </subcellularLocation>
</comment>
<comment type="similarity">
    <text evidence="1">Belongs to the ClpX chaperone family. HslU subfamily.</text>
</comment>
<proteinExistence type="inferred from homology"/>
<evidence type="ECO:0000255" key="1">
    <source>
        <dbReference type="HAMAP-Rule" id="MF_00249"/>
    </source>
</evidence>
<reference key="1">
    <citation type="journal article" date="2003" name="Science">
        <title>Role of mobile DNA in the evolution of vancomycin-resistant Enterococcus faecalis.</title>
        <authorList>
            <person name="Paulsen I.T."/>
            <person name="Banerjei L."/>
            <person name="Myers G.S.A."/>
            <person name="Nelson K.E."/>
            <person name="Seshadri R."/>
            <person name="Read T.D."/>
            <person name="Fouts D.E."/>
            <person name="Eisen J.A."/>
            <person name="Gill S.R."/>
            <person name="Heidelberg J.F."/>
            <person name="Tettelin H."/>
            <person name="Dodson R.J."/>
            <person name="Umayam L.A."/>
            <person name="Brinkac L.M."/>
            <person name="Beanan M.J."/>
            <person name="Daugherty S.C."/>
            <person name="DeBoy R.T."/>
            <person name="Durkin S.A."/>
            <person name="Kolonay J.F."/>
            <person name="Madupu R."/>
            <person name="Nelson W.C."/>
            <person name="Vamathevan J.J."/>
            <person name="Tran B."/>
            <person name="Upton J."/>
            <person name="Hansen T."/>
            <person name="Shetty J."/>
            <person name="Khouri H.M."/>
            <person name="Utterback T.R."/>
            <person name="Radune D."/>
            <person name="Ketchum K.A."/>
            <person name="Dougherty B.A."/>
            <person name="Fraser C.M."/>
        </authorList>
    </citation>
    <scope>NUCLEOTIDE SEQUENCE [LARGE SCALE GENOMIC DNA]</scope>
    <source>
        <strain>ATCC 700802 / V583</strain>
    </source>
</reference>
<protein>
    <recommendedName>
        <fullName evidence="1">ATP-dependent protease ATPase subunit HslU</fullName>
    </recommendedName>
    <alternativeName>
        <fullName evidence="1">Unfoldase HslU</fullName>
    </alternativeName>
</protein>
<dbReference type="EMBL" id="AE016830">
    <property type="protein sequence ID" value="AAO81424.1"/>
    <property type="molecule type" value="Genomic_DNA"/>
</dbReference>
<dbReference type="RefSeq" id="NP_815354.1">
    <property type="nucleotide sequence ID" value="NC_004668.1"/>
</dbReference>
<dbReference type="RefSeq" id="WP_002360239.1">
    <property type="nucleotide sequence ID" value="NZ_KE136528.1"/>
</dbReference>
<dbReference type="SMR" id="Q834K4"/>
<dbReference type="STRING" id="226185.EF_1646"/>
<dbReference type="EnsemblBacteria" id="AAO81424">
    <property type="protein sequence ID" value="AAO81424"/>
    <property type="gene ID" value="EF_1646"/>
</dbReference>
<dbReference type="GeneID" id="60893944"/>
<dbReference type="KEGG" id="efa:EF1646"/>
<dbReference type="PATRIC" id="fig|226185.45.peg.1865"/>
<dbReference type="eggNOG" id="COG1220">
    <property type="taxonomic scope" value="Bacteria"/>
</dbReference>
<dbReference type="HOGENOM" id="CLU_033123_0_0_9"/>
<dbReference type="Proteomes" id="UP000001415">
    <property type="component" value="Chromosome"/>
</dbReference>
<dbReference type="GO" id="GO:0009376">
    <property type="term" value="C:HslUV protease complex"/>
    <property type="evidence" value="ECO:0007669"/>
    <property type="project" value="UniProtKB-UniRule"/>
</dbReference>
<dbReference type="GO" id="GO:0005524">
    <property type="term" value="F:ATP binding"/>
    <property type="evidence" value="ECO:0007669"/>
    <property type="project" value="UniProtKB-UniRule"/>
</dbReference>
<dbReference type="GO" id="GO:0016887">
    <property type="term" value="F:ATP hydrolysis activity"/>
    <property type="evidence" value="ECO:0007669"/>
    <property type="project" value="InterPro"/>
</dbReference>
<dbReference type="GO" id="GO:0008233">
    <property type="term" value="F:peptidase activity"/>
    <property type="evidence" value="ECO:0007669"/>
    <property type="project" value="InterPro"/>
</dbReference>
<dbReference type="GO" id="GO:0036402">
    <property type="term" value="F:proteasome-activating activity"/>
    <property type="evidence" value="ECO:0007669"/>
    <property type="project" value="UniProtKB-UniRule"/>
</dbReference>
<dbReference type="GO" id="GO:0043335">
    <property type="term" value="P:protein unfolding"/>
    <property type="evidence" value="ECO:0007669"/>
    <property type="project" value="UniProtKB-UniRule"/>
</dbReference>
<dbReference type="GO" id="GO:0051603">
    <property type="term" value="P:proteolysis involved in protein catabolic process"/>
    <property type="evidence" value="ECO:0007669"/>
    <property type="project" value="TreeGrafter"/>
</dbReference>
<dbReference type="CDD" id="cd19498">
    <property type="entry name" value="RecA-like_HslU"/>
    <property type="match status" value="1"/>
</dbReference>
<dbReference type="FunFam" id="3.40.50.300:FF:000220">
    <property type="entry name" value="ATP-dependent protease ATPase subunit HslU"/>
    <property type="match status" value="1"/>
</dbReference>
<dbReference type="Gene3D" id="1.10.8.60">
    <property type="match status" value="1"/>
</dbReference>
<dbReference type="Gene3D" id="3.40.50.300">
    <property type="entry name" value="P-loop containing nucleotide triphosphate hydrolases"/>
    <property type="match status" value="2"/>
</dbReference>
<dbReference type="HAMAP" id="MF_00249">
    <property type="entry name" value="HslU"/>
    <property type="match status" value="1"/>
</dbReference>
<dbReference type="InterPro" id="IPR003593">
    <property type="entry name" value="AAA+_ATPase"/>
</dbReference>
<dbReference type="InterPro" id="IPR050052">
    <property type="entry name" value="ATP-dep_Clp_protease_ClpX"/>
</dbReference>
<dbReference type="InterPro" id="IPR003959">
    <property type="entry name" value="ATPase_AAA_core"/>
</dbReference>
<dbReference type="InterPro" id="IPR019489">
    <property type="entry name" value="Clp_ATPase_C"/>
</dbReference>
<dbReference type="InterPro" id="IPR004491">
    <property type="entry name" value="HslU"/>
</dbReference>
<dbReference type="InterPro" id="IPR027417">
    <property type="entry name" value="P-loop_NTPase"/>
</dbReference>
<dbReference type="NCBIfam" id="TIGR00390">
    <property type="entry name" value="hslU"/>
    <property type="match status" value="1"/>
</dbReference>
<dbReference type="NCBIfam" id="NF003544">
    <property type="entry name" value="PRK05201.1"/>
    <property type="match status" value="1"/>
</dbReference>
<dbReference type="PANTHER" id="PTHR48102">
    <property type="entry name" value="ATP-DEPENDENT CLP PROTEASE ATP-BINDING SUBUNIT CLPX-LIKE, MITOCHONDRIAL-RELATED"/>
    <property type="match status" value="1"/>
</dbReference>
<dbReference type="PANTHER" id="PTHR48102:SF3">
    <property type="entry name" value="ATP-DEPENDENT PROTEASE ATPASE SUBUNIT HSLU"/>
    <property type="match status" value="1"/>
</dbReference>
<dbReference type="Pfam" id="PF00004">
    <property type="entry name" value="AAA"/>
    <property type="match status" value="1"/>
</dbReference>
<dbReference type="Pfam" id="PF07724">
    <property type="entry name" value="AAA_2"/>
    <property type="match status" value="1"/>
</dbReference>
<dbReference type="SMART" id="SM00382">
    <property type="entry name" value="AAA"/>
    <property type="match status" value="1"/>
</dbReference>
<dbReference type="SMART" id="SM01086">
    <property type="entry name" value="ClpB_D2-small"/>
    <property type="match status" value="1"/>
</dbReference>
<dbReference type="SUPFAM" id="SSF52540">
    <property type="entry name" value="P-loop containing nucleoside triphosphate hydrolases"/>
    <property type="match status" value="1"/>
</dbReference>
<sequence>MNELNKTPKEIVKELDQYIVGQQAAKKSVAVALRNRYRRLQLEENMQQDITPKNLLMIGPTGVGKTEIARRLAKIVNAPFVKVEATKFTEVGYVGRDVESMVRDLVENAIQIVEKQQYSRVYAQALKKANQRLVKVLVPGIKKEQKQAGGNQFEQMMNMFNMAQQQQEAQEEVTEDIRTNRRTILEQLEKGLLDNREVTIEIEEPKKTMPAMNNGLEQMGIDLNETLGALSPKKKIERTVTVKEAQELLVKEESAKIVNDADIHSEAIRLAESSGIIFIDEIDKITSKSQQNSGEVSREGVQRDILPIVEGSQVNTKYGPLQTDHILFIASGAFHLSKPSDLIPELQGRFPIRVELDDLTADDFVSILTEPNNALIKQYVALIGTENVSVIFTKEAIERLAHIAYDVNRDTDNIGARRLHTILERLLEDLLYEAPDMQMGEITITEAYVNEKLNDIVQNEDLSRYIL</sequence>
<keyword id="KW-0067">ATP-binding</keyword>
<keyword id="KW-0143">Chaperone</keyword>
<keyword id="KW-0963">Cytoplasm</keyword>
<keyword id="KW-0547">Nucleotide-binding</keyword>
<keyword id="KW-1185">Reference proteome</keyword>
<feature type="chain" id="PRO_0000160503" description="ATP-dependent protease ATPase subunit HslU">
    <location>
        <begin position="1"/>
        <end position="467"/>
    </location>
</feature>
<feature type="binding site" evidence="1">
    <location>
        <position position="20"/>
    </location>
    <ligand>
        <name>ATP</name>
        <dbReference type="ChEBI" id="CHEBI:30616"/>
    </ligand>
</feature>
<feature type="binding site" evidence="1">
    <location>
        <begin position="62"/>
        <end position="67"/>
    </location>
    <ligand>
        <name>ATP</name>
        <dbReference type="ChEBI" id="CHEBI:30616"/>
    </ligand>
</feature>
<feature type="binding site" evidence="1">
    <location>
        <position position="280"/>
    </location>
    <ligand>
        <name>ATP</name>
        <dbReference type="ChEBI" id="CHEBI:30616"/>
    </ligand>
</feature>
<feature type="binding site" evidence="1">
    <location>
        <position position="345"/>
    </location>
    <ligand>
        <name>ATP</name>
        <dbReference type="ChEBI" id="CHEBI:30616"/>
    </ligand>
</feature>
<feature type="binding site" evidence="1">
    <location>
        <position position="417"/>
    </location>
    <ligand>
        <name>ATP</name>
        <dbReference type="ChEBI" id="CHEBI:30616"/>
    </ligand>
</feature>
<gene>
    <name evidence="1" type="primary">hslU</name>
    <name type="ordered locus">EF_1646</name>
</gene>